<comment type="function">
    <text evidence="4 5 6 7">E3 ubiquitin-protein ligase. Together with the phosphatase EPM2A/laforin, appears to be involved in the clearance of toxic polyglucosan and protein aggregates via multiple pathways. In complex with EPM2A/laforin and HSP70, suppresses the cellular toxicity of misfolded proteins by promoting their degradation through the ubiquitin-proteasome system (UPS). Ubiquitinates the glycogen-targeting protein phosphatase subunits PPP1R3C/PTG and PPP1R3D in a laforin-dependent manner and targets them for proteasome-dependent degradation, thus decreasing glycogen accumulation. Polyubiquitinates EPM2A/laforin and ubiquitinates AGL and targets them for proteasome-dependent degradation. Also promotes proteasome-independent protein degradation through the macroautophagy pathway.</text>
</comment>
<comment type="catalytic activity">
    <reaction>
        <text>S-ubiquitinyl-[E2 ubiquitin-conjugating enzyme]-L-cysteine + [acceptor protein]-L-lysine = [E2 ubiquitin-conjugating enzyme]-L-cysteine + N(6)-ubiquitinyl-[acceptor protein]-L-lysine.</text>
        <dbReference type="EC" id="2.3.2.27"/>
    </reaction>
</comment>
<comment type="pathway">
    <text>Protein modification; protein ubiquitination.</text>
</comment>
<comment type="subunit">
    <text evidence="2">Interacts with AGL. Interacts (via the NHL repeats) with EPM2A/laforin (By similarity). Forms a complex with EPM2A/laforin and HSP70. Interacts with PRDM8 (By similarity).</text>
</comment>
<comment type="subcellular location">
    <subcellularLocation>
        <location evidence="1">Endoplasmic reticulum</location>
    </subcellularLocation>
    <subcellularLocation>
        <location evidence="1">Nucleus</location>
    </subcellularLocation>
    <text evidence="1">Localizes at the endoplasmic reticulum and, to a lesser extent, in the nucleus.</text>
</comment>
<comment type="domain">
    <text evidence="1">The RING domain is essential for ubiquitin E3 ligase activity.</text>
</comment>
<comment type="disruption phenotype">
    <text evidence="5 6 7">Significant impairment of motor activity, coordination and balance; spontaneous myoclonic seizures; and decreases in episodic memory. 3- and 6-month old mice contain numerous large insoluble aggregates composed mainly of polyglucosans called Lafora bodies (LBs) in skeletal muscle, liver, heart and brain. Glycogen levels are increased 1.6-fold and 1.2-fold respectively in skeletal muscle and liver of 6-month old mice. Glycogen phosphate levels are increased 1.5-fold in skeletal muscle and liver of 6-month old mice. In brain extracts from 1-, 3- and 12-month old mice, total amounts of Epm2b/laforin protein (but not mRNA) are increased. In brain and embryonic fibroblast cells, levels of the autophagy marker Map1lc3b/LC3-II are reduced. In the brain, levels of the autophagy dysfunction marker Sqstm1/p62 are increased.</text>
</comment>
<organism>
    <name type="scientific">Mus musculus</name>
    <name type="common">Mouse</name>
    <dbReference type="NCBI Taxonomy" id="10090"/>
    <lineage>
        <taxon>Eukaryota</taxon>
        <taxon>Metazoa</taxon>
        <taxon>Chordata</taxon>
        <taxon>Craniata</taxon>
        <taxon>Vertebrata</taxon>
        <taxon>Euteleostomi</taxon>
        <taxon>Mammalia</taxon>
        <taxon>Eutheria</taxon>
        <taxon>Euarchontoglires</taxon>
        <taxon>Glires</taxon>
        <taxon>Rodentia</taxon>
        <taxon>Myomorpha</taxon>
        <taxon>Muroidea</taxon>
        <taxon>Muridae</taxon>
        <taxon>Murinae</taxon>
        <taxon>Mus</taxon>
        <taxon>Mus</taxon>
    </lineage>
</organism>
<accession>Q8BR37</accession>
<feature type="chain" id="PRO_0000055981" description="E3 ubiquitin-protein ligase NHLRC1">
    <location>
        <begin position="1"/>
        <end position="401"/>
    </location>
</feature>
<feature type="repeat" description="NHL 1">
    <location>
        <begin position="115"/>
        <end position="159"/>
    </location>
</feature>
<feature type="repeat" description="NHL 2">
    <location>
        <begin position="163"/>
        <end position="206"/>
    </location>
</feature>
<feature type="repeat" description="NHL 3">
    <location>
        <begin position="207"/>
        <end position="247"/>
    </location>
</feature>
<feature type="repeat" description="NHL 4">
    <location>
        <begin position="250"/>
        <end position="303"/>
    </location>
</feature>
<feature type="repeat" description="NHL 5">
    <location>
        <begin position="304"/>
        <end position="352"/>
    </location>
</feature>
<feature type="repeat" description="NHL 6">
    <location>
        <begin position="353"/>
        <end position="396"/>
    </location>
</feature>
<feature type="zinc finger region" description="RING-type" evidence="3">
    <location>
        <begin position="28"/>
        <end position="74"/>
    </location>
</feature>
<reference key="1">
    <citation type="journal article" date="2003" name="Nat. Genet.">
        <title>Mutations in NHLRC1 cause progressive myoclonus epilepsy.</title>
        <authorList>
            <person name="Chan E.M."/>
            <person name="Young E.J."/>
            <person name="Ianzano L."/>
            <person name="Munteanu I."/>
            <person name="Zhao X."/>
            <person name="Christopoulos C.C."/>
            <person name="Avanzini G."/>
            <person name="Elia M."/>
            <person name="Ackerley C.A."/>
            <person name="Jovic N.J."/>
            <person name="Bohlega S."/>
            <person name="Andermann E."/>
            <person name="Rouleau G.A."/>
            <person name="Delgado-Escueta A.V."/>
            <person name="Minassian B.A."/>
            <person name="Scherer S.W."/>
        </authorList>
    </citation>
    <scope>NUCLEOTIDE SEQUENCE [MRNA]</scope>
</reference>
<reference key="2">
    <citation type="journal article" date="2005" name="Science">
        <title>The transcriptional landscape of the mammalian genome.</title>
        <authorList>
            <person name="Carninci P."/>
            <person name="Kasukawa T."/>
            <person name="Katayama S."/>
            <person name="Gough J."/>
            <person name="Frith M.C."/>
            <person name="Maeda N."/>
            <person name="Oyama R."/>
            <person name="Ravasi T."/>
            <person name="Lenhard B."/>
            <person name="Wells C."/>
            <person name="Kodzius R."/>
            <person name="Shimokawa K."/>
            <person name="Bajic V.B."/>
            <person name="Brenner S.E."/>
            <person name="Batalov S."/>
            <person name="Forrest A.R."/>
            <person name="Zavolan M."/>
            <person name="Davis M.J."/>
            <person name="Wilming L.G."/>
            <person name="Aidinis V."/>
            <person name="Allen J.E."/>
            <person name="Ambesi-Impiombato A."/>
            <person name="Apweiler R."/>
            <person name="Aturaliya R.N."/>
            <person name="Bailey T.L."/>
            <person name="Bansal M."/>
            <person name="Baxter L."/>
            <person name="Beisel K.W."/>
            <person name="Bersano T."/>
            <person name="Bono H."/>
            <person name="Chalk A.M."/>
            <person name="Chiu K.P."/>
            <person name="Choudhary V."/>
            <person name="Christoffels A."/>
            <person name="Clutterbuck D.R."/>
            <person name="Crowe M.L."/>
            <person name="Dalla E."/>
            <person name="Dalrymple B.P."/>
            <person name="de Bono B."/>
            <person name="Della Gatta G."/>
            <person name="di Bernardo D."/>
            <person name="Down T."/>
            <person name="Engstrom P."/>
            <person name="Fagiolini M."/>
            <person name="Faulkner G."/>
            <person name="Fletcher C.F."/>
            <person name="Fukushima T."/>
            <person name="Furuno M."/>
            <person name="Futaki S."/>
            <person name="Gariboldi M."/>
            <person name="Georgii-Hemming P."/>
            <person name="Gingeras T.R."/>
            <person name="Gojobori T."/>
            <person name="Green R.E."/>
            <person name="Gustincich S."/>
            <person name="Harbers M."/>
            <person name="Hayashi Y."/>
            <person name="Hensch T.K."/>
            <person name="Hirokawa N."/>
            <person name="Hill D."/>
            <person name="Huminiecki L."/>
            <person name="Iacono M."/>
            <person name="Ikeo K."/>
            <person name="Iwama A."/>
            <person name="Ishikawa T."/>
            <person name="Jakt M."/>
            <person name="Kanapin A."/>
            <person name="Katoh M."/>
            <person name="Kawasawa Y."/>
            <person name="Kelso J."/>
            <person name="Kitamura H."/>
            <person name="Kitano H."/>
            <person name="Kollias G."/>
            <person name="Krishnan S.P."/>
            <person name="Kruger A."/>
            <person name="Kummerfeld S.K."/>
            <person name="Kurochkin I.V."/>
            <person name="Lareau L.F."/>
            <person name="Lazarevic D."/>
            <person name="Lipovich L."/>
            <person name="Liu J."/>
            <person name="Liuni S."/>
            <person name="McWilliam S."/>
            <person name="Madan Babu M."/>
            <person name="Madera M."/>
            <person name="Marchionni L."/>
            <person name="Matsuda H."/>
            <person name="Matsuzawa S."/>
            <person name="Miki H."/>
            <person name="Mignone F."/>
            <person name="Miyake S."/>
            <person name="Morris K."/>
            <person name="Mottagui-Tabar S."/>
            <person name="Mulder N."/>
            <person name="Nakano N."/>
            <person name="Nakauchi H."/>
            <person name="Ng P."/>
            <person name="Nilsson R."/>
            <person name="Nishiguchi S."/>
            <person name="Nishikawa S."/>
            <person name="Nori F."/>
            <person name="Ohara O."/>
            <person name="Okazaki Y."/>
            <person name="Orlando V."/>
            <person name="Pang K.C."/>
            <person name="Pavan W.J."/>
            <person name="Pavesi G."/>
            <person name="Pesole G."/>
            <person name="Petrovsky N."/>
            <person name="Piazza S."/>
            <person name="Reed J."/>
            <person name="Reid J.F."/>
            <person name="Ring B.Z."/>
            <person name="Ringwald M."/>
            <person name="Rost B."/>
            <person name="Ruan Y."/>
            <person name="Salzberg S.L."/>
            <person name="Sandelin A."/>
            <person name="Schneider C."/>
            <person name="Schoenbach C."/>
            <person name="Sekiguchi K."/>
            <person name="Semple C.A."/>
            <person name="Seno S."/>
            <person name="Sessa L."/>
            <person name="Sheng Y."/>
            <person name="Shibata Y."/>
            <person name="Shimada H."/>
            <person name="Shimada K."/>
            <person name="Silva D."/>
            <person name="Sinclair B."/>
            <person name="Sperling S."/>
            <person name="Stupka E."/>
            <person name="Sugiura K."/>
            <person name="Sultana R."/>
            <person name="Takenaka Y."/>
            <person name="Taki K."/>
            <person name="Tammoja K."/>
            <person name="Tan S.L."/>
            <person name="Tang S."/>
            <person name="Taylor M.S."/>
            <person name="Tegner J."/>
            <person name="Teichmann S.A."/>
            <person name="Ueda H.R."/>
            <person name="van Nimwegen E."/>
            <person name="Verardo R."/>
            <person name="Wei C.L."/>
            <person name="Yagi K."/>
            <person name="Yamanishi H."/>
            <person name="Zabarovsky E."/>
            <person name="Zhu S."/>
            <person name="Zimmer A."/>
            <person name="Hide W."/>
            <person name="Bult C."/>
            <person name="Grimmond S.M."/>
            <person name="Teasdale R.D."/>
            <person name="Liu E.T."/>
            <person name="Brusic V."/>
            <person name="Quackenbush J."/>
            <person name="Wahlestedt C."/>
            <person name="Mattick J.S."/>
            <person name="Hume D.A."/>
            <person name="Kai C."/>
            <person name="Sasaki D."/>
            <person name="Tomaru Y."/>
            <person name="Fukuda S."/>
            <person name="Kanamori-Katayama M."/>
            <person name="Suzuki M."/>
            <person name="Aoki J."/>
            <person name="Arakawa T."/>
            <person name="Iida J."/>
            <person name="Imamura K."/>
            <person name="Itoh M."/>
            <person name="Kato T."/>
            <person name="Kawaji H."/>
            <person name="Kawagashira N."/>
            <person name="Kawashima T."/>
            <person name="Kojima M."/>
            <person name="Kondo S."/>
            <person name="Konno H."/>
            <person name="Nakano K."/>
            <person name="Ninomiya N."/>
            <person name="Nishio T."/>
            <person name="Okada M."/>
            <person name="Plessy C."/>
            <person name="Shibata K."/>
            <person name="Shiraki T."/>
            <person name="Suzuki S."/>
            <person name="Tagami M."/>
            <person name="Waki K."/>
            <person name="Watahiki A."/>
            <person name="Okamura-Oho Y."/>
            <person name="Suzuki H."/>
            <person name="Kawai J."/>
            <person name="Hayashizaki Y."/>
        </authorList>
    </citation>
    <scope>NUCLEOTIDE SEQUENCE [LARGE SCALE MRNA]</scope>
    <source>
        <strain>C57BL/6J</strain>
        <tissue>Brain</tissue>
    </source>
</reference>
<reference key="3">
    <citation type="journal article" date="2009" name="Hum. Mol. Genet.">
        <title>The malin-laforin complex suppresses the cellular toxicity of misfolded proteins by promoting their degradation through the ubiquitin-proteasome system.</title>
        <authorList>
            <person name="Garyali P."/>
            <person name="Siwach P."/>
            <person name="Singh P.K."/>
            <person name="Puri R."/>
            <person name="Mittal S."/>
            <person name="Sengupta S."/>
            <person name="Parihar R."/>
            <person name="Ganesh S."/>
        </authorList>
    </citation>
    <scope>FUNCTION</scope>
    <scope>COMPLEX FORMATION WITH EPM2A AND HSP70</scope>
</reference>
<reference key="4">
    <citation type="journal article" date="2010" name="Ann. Neurol.">
        <title>Glycogen hyperphosphorylation underlies lafora body formation.</title>
        <authorList>
            <person name="Turnbull J."/>
            <person name="Wang P."/>
            <person name="Girard J.M."/>
            <person name="Ruggieri A."/>
            <person name="Wang T.J."/>
            <person name="Draginov A.G."/>
            <person name="Kameka A.P."/>
            <person name="Pencea N."/>
            <person name="Zhao X."/>
            <person name="Ackerley C.A."/>
            <person name="Minassian B.A."/>
        </authorList>
    </citation>
    <scope>FUNCTION</scope>
    <scope>DISRUPTION PHENOTYPE</scope>
</reference>
<reference key="5">
    <citation type="journal article" date="2012" name="Hum. Mol. Genet.">
        <title>Lafora bodies and neurological defects in malin-deficient mice correlate with impaired autophagy.</title>
        <authorList>
            <person name="Criado O."/>
            <person name="Aguado C."/>
            <person name="Gayarre J."/>
            <person name="Duran-Trio L."/>
            <person name="Garcia-Cabrero A.M."/>
            <person name="Vernia S."/>
            <person name="San Millan B."/>
            <person name="Heredia M."/>
            <person name="Roma-Mateo C."/>
            <person name="Mouron S."/>
            <person name="Juana-Lopez L."/>
            <person name="Dominguez M."/>
            <person name="Navarro C."/>
            <person name="Serratosa J.M."/>
            <person name="Sanchez M."/>
            <person name="Sanz P."/>
            <person name="Bovolenta P."/>
            <person name="Knecht E."/>
            <person name="Rodriguez de Cordoba S."/>
        </authorList>
    </citation>
    <scope>FUNCTION</scope>
    <scope>DISRUPTION PHENOTYPE</scope>
</reference>
<reference key="6">
    <citation type="journal article" date="2012" name="J. Biol. Chem.">
        <title>Increased laforin and laforin binding to glycogen underlie Lafora body formation in malin-deficient Lafora disease.</title>
        <authorList>
            <person name="Tiberia E."/>
            <person name="Turnbull J."/>
            <person name="Wang T."/>
            <person name="Ruggieri A."/>
            <person name="Zhao X.C."/>
            <person name="Pencea N."/>
            <person name="Israelian J."/>
            <person name="Wang Y."/>
            <person name="Ackerley C.A."/>
            <person name="Wang P."/>
            <person name="Liu Y."/>
            <person name="Minassian B.A."/>
        </authorList>
    </citation>
    <scope>FUNCTION</scope>
    <scope>DISRUPTION PHENOTYPE</scope>
</reference>
<evidence type="ECO:0000250" key="1"/>
<evidence type="ECO:0000250" key="2">
    <source>
        <dbReference type="UniProtKB" id="Q6VVB1"/>
    </source>
</evidence>
<evidence type="ECO:0000255" key="3">
    <source>
        <dbReference type="PROSITE-ProRule" id="PRU00175"/>
    </source>
</evidence>
<evidence type="ECO:0000269" key="4">
    <source>
    </source>
</evidence>
<evidence type="ECO:0000269" key="5">
    <source>
    </source>
</evidence>
<evidence type="ECO:0000269" key="6">
    <source>
    </source>
</evidence>
<evidence type="ECO:0000269" key="7">
    <source>
    </source>
</evidence>
<evidence type="ECO:0000305" key="8"/>
<gene>
    <name type="primary">Nhlrc1</name>
    <name type="synonym">Epm2b</name>
</gene>
<sequence>MGEEATAVAAAGVRPELVREAEVSLLECKVCFERFGHWQQRRPRNLPCGHVVCLACVAALAHPRTLGLECPFCRRACRACDTSDCLPVLHLLELLGSTLHASPAALSAAPFAPGTLTCYHAFGGWGTLVNPTGLALCPKTGRVVVVHDGKRRVKIFDSGGGGAHQFGEKGDAAHDVKYPLDVAVTNDCHVVVTDAGDCSLKVFDFFGQIKLVVGKQFSLPWGVEITPHNGVLVTDAEAGTLHLLEADFPEGVLRRIERLQAHLCSPRGLAVSWLTGAIAVLEHPCAFGRTGCNNTRVKVFNSTMQLIGQVDSFGLNLLFPSKVTASAVTFDHQGNVIVADTSGPAIVCLGKPEEFPALKPIITHGLSRPVALAFTKENSLLVLDTASHSIKVFKVMEGNGG</sequence>
<dbReference type="EC" id="2.3.2.27"/>
<dbReference type="EMBL" id="BK001499">
    <property type="protein sequence ID" value="DAA01953.1"/>
    <property type="molecule type" value="mRNA"/>
</dbReference>
<dbReference type="EMBL" id="AK045746">
    <property type="protein sequence ID" value="BAC32478.1"/>
    <property type="molecule type" value="mRNA"/>
</dbReference>
<dbReference type="CCDS" id="CCDS26487.1"/>
<dbReference type="RefSeq" id="NP_780549.1">
    <property type="nucleotide sequence ID" value="NM_175340.4"/>
</dbReference>
<dbReference type="SMR" id="Q8BR37"/>
<dbReference type="BioGRID" id="222784">
    <property type="interactions" value="3"/>
</dbReference>
<dbReference type="FunCoup" id="Q8BR37">
    <property type="interactions" value="1533"/>
</dbReference>
<dbReference type="STRING" id="10090.ENSMUSP00000054990"/>
<dbReference type="PhosphoSitePlus" id="Q8BR37"/>
<dbReference type="PaxDb" id="10090-ENSMUSP00000054990"/>
<dbReference type="ProteomicsDB" id="287421"/>
<dbReference type="Antibodypedia" id="25182">
    <property type="antibodies" value="271 antibodies from 28 providers"/>
</dbReference>
<dbReference type="DNASU" id="105193"/>
<dbReference type="Ensembl" id="ENSMUST00000052747.4">
    <property type="protein sequence ID" value="ENSMUSP00000054990.3"/>
    <property type="gene ID" value="ENSMUSG00000044231.4"/>
</dbReference>
<dbReference type="GeneID" id="105193"/>
<dbReference type="KEGG" id="mmu:105193"/>
<dbReference type="UCSC" id="uc007qhp.2">
    <property type="organism name" value="mouse"/>
</dbReference>
<dbReference type="AGR" id="MGI:2145264"/>
<dbReference type="CTD" id="378884"/>
<dbReference type="MGI" id="MGI:2145264">
    <property type="gene designation" value="Nhlrc1"/>
</dbReference>
<dbReference type="VEuPathDB" id="HostDB:ENSMUSG00000044231"/>
<dbReference type="eggNOG" id="KOG2177">
    <property type="taxonomic scope" value="Eukaryota"/>
</dbReference>
<dbReference type="GeneTree" id="ENSGT00730000111361"/>
<dbReference type="HOGENOM" id="CLU_696320_0_0_1"/>
<dbReference type="InParanoid" id="Q8BR37"/>
<dbReference type="OMA" id="HHAFGGW"/>
<dbReference type="OrthoDB" id="6105938at2759"/>
<dbReference type="PhylomeDB" id="Q8BR37"/>
<dbReference type="TreeFam" id="TF331018"/>
<dbReference type="UniPathway" id="UPA00143"/>
<dbReference type="BioGRID-ORCS" id="105193">
    <property type="hits" value="1 hit in 77 CRISPR screens"/>
</dbReference>
<dbReference type="ChiTaRS" id="Nhlrc1">
    <property type="organism name" value="mouse"/>
</dbReference>
<dbReference type="PRO" id="PR:Q8BR37"/>
<dbReference type="Proteomes" id="UP000000589">
    <property type="component" value="Chromosome 13"/>
</dbReference>
<dbReference type="RNAct" id="Q8BR37">
    <property type="molecule type" value="protein"/>
</dbReference>
<dbReference type="Bgee" id="ENSMUSG00000044231">
    <property type="expression patterns" value="Expressed in interventricular septum and 182 other cell types or tissues"/>
</dbReference>
<dbReference type="ExpressionAtlas" id="Q8BR37">
    <property type="expression patterns" value="baseline and differential"/>
</dbReference>
<dbReference type="GO" id="GO:0005829">
    <property type="term" value="C:cytosol"/>
    <property type="evidence" value="ECO:0007669"/>
    <property type="project" value="Ensembl"/>
</dbReference>
<dbReference type="GO" id="GO:0005783">
    <property type="term" value="C:endoplasmic reticulum"/>
    <property type="evidence" value="ECO:0007669"/>
    <property type="project" value="UniProtKB-SubCell"/>
</dbReference>
<dbReference type="GO" id="GO:0005654">
    <property type="term" value="C:nucleoplasm"/>
    <property type="evidence" value="ECO:0007669"/>
    <property type="project" value="Ensembl"/>
</dbReference>
<dbReference type="GO" id="GO:0005634">
    <property type="term" value="C:nucleus"/>
    <property type="evidence" value="ECO:0000314"/>
    <property type="project" value="MGI"/>
</dbReference>
<dbReference type="GO" id="GO:0048471">
    <property type="term" value="C:perinuclear region of cytoplasm"/>
    <property type="evidence" value="ECO:0000314"/>
    <property type="project" value="MGI"/>
</dbReference>
<dbReference type="GO" id="GO:0061630">
    <property type="term" value="F:ubiquitin protein ligase activity"/>
    <property type="evidence" value="ECO:0000314"/>
    <property type="project" value="MGI"/>
</dbReference>
<dbReference type="GO" id="GO:0004842">
    <property type="term" value="F:ubiquitin-protein transferase activity"/>
    <property type="evidence" value="ECO:0000250"/>
    <property type="project" value="UniProtKB"/>
</dbReference>
<dbReference type="GO" id="GO:0008270">
    <property type="term" value="F:zinc ion binding"/>
    <property type="evidence" value="ECO:0007669"/>
    <property type="project" value="UniProtKB-KW"/>
</dbReference>
<dbReference type="GO" id="GO:0006914">
    <property type="term" value="P:autophagy"/>
    <property type="evidence" value="ECO:0000315"/>
    <property type="project" value="MGI"/>
</dbReference>
<dbReference type="GO" id="GO:0005978">
    <property type="term" value="P:glycogen biosynthetic process"/>
    <property type="evidence" value="ECO:0000315"/>
    <property type="project" value="MGI"/>
</dbReference>
<dbReference type="GO" id="GO:0005977">
    <property type="term" value="P:glycogen metabolic process"/>
    <property type="evidence" value="ECO:0000315"/>
    <property type="project" value="MGI"/>
</dbReference>
<dbReference type="GO" id="GO:0031398">
    <property type="term" value="P:positive regulation of protein ubiquitination"/>
    <property type="evidence" value="ECO:0000314"/>
    <property type="project" value="MGI"/>
</dbReference>
<dbReference type="GO" id="GO:0043161">
    <property type="term" value="P:proteasome-mediated ubiquitin-dependent protein catabolic process"/>
    <property type="evidence" value="ECO:0000315"/>
    <property type="project" value="MGI"/>
</dbReference>
<dbReference type="GO" id="GO:0000209">
    <property type="term" value="P:protein polyubiquitination"/>
    <property type="evidence" value="ECO:0000250"/>
    <property type="project" value="UniProtKB"/>
</dbReference>
<dbReference type="GO" id="GO:0016567">
    <property type="term" value="P:protein ubiquitination"/>
    <property type="evidence" value="ECO:0000314"/>
    <property type="project" value="MGI"/>
</dbReference>
<dbReference type="GO" id="GO:0010468">
    <property type="term" value="P:regulation of gene expression"/>
    <property type="evidence" value="ECO:0000315"/>
    <property type="project" value="MGI"/>
</dbReference>
<dbReference type="GO" id="GO:1903076">
    <property type="term" value="P:regulation of protein localization to plasma membrane"/>
    <property type="evidence" value="ECO:0000316"/>
    <property type="project" value="MGI"/>
</dbReference>
<dbReference type="GO" id="GO:0031396">
    <property type="term" value="P:regulation of protein ubiquitination"/>
    <property type="evidence" value="ECO:0000316"/>
    <property type="project" value="MGI"/>
</dbReference>
<dbReference type="GO" id="GO:0034976">
    <property type="term" value="P:response to endoplasmic reticulum stress"/>
    <property type="evidence" value="ECO:0000315"/>
    <property type="project" value="MGI"/>
</dbReference>
<dbReference type="GO" id="GO:0006511">
    <property type="term" value="P:ubiquitin-dependent protein catabolic process"/>
    <property type="evidence" value="ECO:0000266"/>
    <property type="project" value="MGI"/>
</dbReference>
<dbReference type="CDD" id="cd14961">
    <property type="entry name" value="NHL_TRIM32_like"/>
    <property type="match status" value="1"/>
</dbReference>
<dbReference type="CDD" id="cd16516">
    <property type="entry name" value="RING-HC_malin"/>
    <property type="match status" value="1"/>
</dbReference>
<dbReference type="FunFam" id="2.120.10.30:FF:000059">
    <property type="entry name" value="E3 ubiquitin-protein ligase NHLRC1"/>
    <property type="match status" value="1"/>
</dbReference>
<dbReference type="FunFam" id="3.30.40.10:FF:000372">
    <property type="entry name" value="E3 ubiquitin-protein ligase NHLRC1"/>
    <property type="match status" value="1"/>
</dbReference>
<dbReference type="Gene3D" id="2.40.10.500">
    <property type="match status" value="1"/>
</dbReference>
<dbReference type="Gene3D" id="2.120.10.30">
    <property type="entry name" value="TolB, C-terminal domain"/>
    <property type="match status" value="1"/>
</dbReference>
<dbReference type="Gene3D" id="3.30.40.10">
    <property type="entry name" value="Zinc/RING finger domain, C3HC4 (zinc finger)"/>
    <property type="match status" value="1"/>
</dbReference>
<dbReference type="InterPro" id="IPR011042">
    <property type="entry name" value="6-blade_b-propeller_TolB-like"/>
</dbReference>
<dbReference type="InterPro" id="IPR001258">
    <property type="entry name" value="NHL_repeat"/>
</dbReference>
<dbReference type="InterPro" id="IPR050952">
    <property type="entry name" value="TRIM-NHL_E3_ligases"/>
</dbReference>
<dbReference type="InterPro" id="IPR001841">
    <property type="entry name" value="Znf_RING"/>
</dbReference>
<dbReference type="InterPro" id="IPR013083">
    <property type="entry name" value="Znf_RING/FYVE/PHD"/>
</dbReference>
<dbReference type="InterPro" id="IPR017907">
    <property type="entry name" value="Znf_RING_CS"/>
</dbReference>
<dbReference type="PANTHER" id="PTHR24104:SF47">
    <property type="entry name" value="E3 UBIQUITIN-PROTEIN LIGASE NHLRC1"/>
    <property type="match status" value="1"/>
</dbReference>
<dbReference type="PANTHER" id="PTHR24104">
    <property type="entry name" value="E3 UBIQUITIN-PROTEIN LIGASE NHLRC1-RELATED"/>
    <property type="match status" value="1"/>
</dbReference>
<dbReference type="SMART" id="SM00184">
    <property type="entry name" value="RING"/>
    <property type="match status" value="1"/>
</dbReference>
<dbReference type="SUPFAM" id="SSF101898">
    <property type="entry name" value="NHL repeat"/>
    <property type="match status" value="1"/>
</dbReference>
<dbReference type="SUPFAM" id="SSF57850">
    <property type="entry name" value="RING/U-box"/>
    <property type="match status" value="1"/>
</dbReference>
<dbReference type="PROSITE" id="PS51125">
    <property type="entry name" value="NHL"/>
    <property type="match status" value="6"/>
</dbReference>
<dbReference type="PROSITE" id="PS00518">
    <property type="entry name" value="ZF_RING_1"/>
    <property type="match status" value="1"/>
</dbReference>
<dbReference type="PROSITE" id="PS50089">
    <property type="entry name" value="ZF_RING_2"/>
    <property type="match status" value="1"/>
</dbReference>
<proteinExistence type="evidence at transcript level"/>
<keyword id="KW-0072">Autophagy</keyword>
<keyword id="KW-0256">Endoplasmic reticulum</keyword>
<keyword id="KW-0479">Metal-binding</keyword>
<keyword id="KW-0539">Nucleus</keyword>
<keyword id="KW-1185">Reference proteome</keyword>
<keyword id="KW-0677">Repeat</keyword>
<keyword id="KW-0808">Transferase</keyword>
<keyword id="KW-0833">Ubl conjugation pathway</keyword>
<keyword id="KW-0862">Zinc</keyword>
<keyword id="KW-0863">Zinc-finger</keyword>
<protein>
    <recommendedName>
        <fullName>E3 ubiquitin-protein ligase NHLRC1</fullName>
        <ecNumber>2.3.2.27</ecNumber>
    </recommendedName>
    <alternativeName>
        <fullName>Malin</fullName>
    </alternativeName>
    <alternativeName>
        <fullName>NHL repeat-containing protein 1</fullName>
    </alternativeName>
    <alternativeName>
        <fullName evidence="8">RING-type E3 ubiquitin transferase NHLRC1</fullName>
    </alternativeName>
</protein>
<name>NHLC1_MOUSE</name>